<feature type="chain" id="PRO_1000202789" description="Holo-[acyl-carrier-protein] synthase">
    <location>
        <begin position="1"/>
        <end position="116"/>
    </location>
</feature>
<feature type="binding site" evidence="1">
    <location>
        <position position="8"/>
    </location>
    <ligand>
        <name>Mg(2+)</name>
        <dbReference type="ChEBI" id="CHEBI:18420"/>
    </ligand>
</feature>
<feature type="binding site" evidence="1">
    <location>
        <position position="50"/>
    </location>
    <ligand>
        <name>Mg(2+)</name>
        <dbReference type="ChEBI" id="CHEBI:18420"/>
    </ligand>
</feature>
<proteinExistence type="inferred from homology"/>
<comment type="function">
    <text evidence="1">Transfers the 4'-phosphopantetheine moiety from coenzyme A to a Ser of acyl-carrier-protein.</text>
</comment>
<comment type="catalytic activity">
    <reaction evidence="1">
        <text>apo-[ACP] + CoA = holo-[ACP] + adenosine 3',5'-bisphosphate + H(+)</text>
        <dbReference type="Rhea" id="RHEA:12068"/>
        <dbReference type="Rhea" id="RHEA-COMP:9685"/>
        <dbReference type="Rhea" id="RHEA-COMP:9690"/>
        <dbReference type="ChEBI" id="CHEBI:15378"/>
        <dbReference type="ChEBI" id="CHEBI:29999"/>
        <dbReference type="ChEBI" id="CHEBI:57287"/>
        <dbReference type="ChEBI" id="CHEBI:58343"/>
        <dbReference type="ChEBI" id="CHEBI:64479"/>
        <dbReference type="EC" id="2.7.8.7"/>
    </reaction>
</comment>
<comment type="cofactor">
    <cofactor evidence="1">
        <name>Mg(2+)</name>
        <dbReference type="ChEBI" id="CHEBI:18420"/>
    </cofactor>
</comment>
<comment type="subcellular location">
    <subcellularLocation>
        <location evidence="1">Cytoplasm</location>
    </subcellularLocation>
</comment>
<comment type="similarity">
    <text evidence="1">Belongs to the P-Pant transferase superfamily. AcpS family.</text>
</comment>
<organism>
    <name type="scientific">Beutenbergia cavernae (strain ATCC BAA-8 / DSM 12333 / CCUG 43141 / JCM 11478 / NBRC 16432 / NCIMB 13614 / HKI 0122)</name>
    <dbReference type="NCBI Taxonomy" id="471853"/>
    <lineage>
        <taxon>Bacteria</taxon>
        <taxon>Bacillati</taxon>
        <taxon>Actinomycetota</taxon>
        <taxon>Actinomycetes</taxon>
        <taxon>Micrococcales</taxon>
        <taxon>Beutenbergiaceae</taxon>
        <taxon>Beutenbergia</taxon>
    </lineage>
</organism>
<protein>
    <recommendedName>
        <fullName evidence="1">Holo-[acyl-carrier-protein] synthase</fullName>
        <shortName evidence="1">Holo-ACP synthase</shortName>
        <ecNumber evidence="1">2.7.8.7</ecNumber>
    </recommendedName>
    <alternativeName>
        <fullName evidence="1">4'-phosphopantetheinyl transferase AcpS</fullName>
    </alternativeName>
</protein>
<keyword id="KW-0963">Cytoplasm</keyword>
<keyword id="KW-0275">Fatty acid biosynthesis</keyword>
<keyword id="KW-0276">Fatty acid metabolism</keyword>
<keyword id="KW-0444">Lipid biosynthesis</keyword>
<keyword id="KW-0443">Lipid metabolism</keyword>
<keyword id="KW-0460">Magnesium</keyword>
<keyword id="KW-0479">Metal-binding</keyword>
<keyword id="KW-1185">Reference proteome</keyword>
<keyword id="KW-0808">Transferase</keyword>
<evidence type="ECO:0000255" key="1">
    <source>
        <dbReference type="HAMAP-Rule" id="MF_00101"/>
    </source>
</evidence>
<reference key="1">
    <citation type="journal article" date="2009" name="Stand. Genomic Sci.">
        <title>Complete genome sequence of Beutenbergia cavernae type strain (HKI 0122).</title>
        <authorList>
            <person name="Land M."/>
            <person name="Pukall R."/>
            <person name="Abt B."/>
            <person name="Goker M."/>
            <person name="Rohde M."/>
            <person name="Glavina Del Rio T."/>
            <person name="Tice H."/>
            <person name="Copeland A."/>
            <person name="Cheng J.F."/>
            <person name="Lucas S."/>
            <person name="Chen F."/>
            <person name="Nolan M."/>
            <person name="Bruce D."/>
            <person name="Goodwin L."/>
            <person name="Pitluck S."/>
            <person name="Ivanova N."/>
            <person name="Mavromatis K."/>
            <person name="Ovchinnikova G."/>
            <person name="Pati A."/>
            <person name="Chen A."/>
            <person name="Palaniappan K."/>
            <person name="Hauser L."/>
            <person name="Chang Y.J."/>
            <person name="Jefferies C.C."/>
            <person name="Saunders E."/>
            <person name="Brettin T."/>
            <person name="Detter J.C."/>
            <person name="Han C."/>
            <person name="Chain P."/>
            <person name="Bristow J."/>
            <person name="Eisen J.A."/>
            <person name="Markowitz V."/>
            <person name="Hugenholtz P."/>
            <person name="Kyrpides N.C."/>
            <person name="Klenk H.P."/>
            <person name="Lapidus A."/>
        </authorList>
    </citation>
    <scope>NUCLEOTIDE SEQUENCE [LARGE SCALE GENOMIC DNA]</scope>
    <source>
        <strain>ATCC BAA-8 / DSM 12333 / CCUG 43141 / JCM 11478 / NBRC 16432 / NCIMB 13614 / HKI 0122</strain>
    </source>
</reference>
<name>ACPS_BEUC1</name>
<sequence>MIVGVGIDVVDVARFLAALDRSPRLRDRLFTPEERDLVGGSLAARFAAKEAIAKALGAPGGMRWHDATVARVPGGAPAVSLRGTVLAVADGLGITSWHLSLSHDAGIASAIAVAER</sequence>
<gene>
    <name evidence="1" type="primary">acpS</name>
    <name type="ordered locus">Bcav_3084</name>
</gene>
<dbReference type="EC" id="2.7.8.7" evidence="1"/>
<dbReference type="EMBL" id="CP001618">
    <property type="protein sequence ID" value="ACQ81328.1"/>
    <property type="molecule type" value="Genomic_DNA"/>
</dbReference>
<dbReference type="RefSeq" id="WP_015883568.1">
    <property type="nucleotide sequence ID" value="NC_012669.1"/>
</dbReference>
<dbReference type="SMR" id="C5BZZ8"/>
<dbReference type="STRING" id="471853.Bcav_3084"/>
<dbReference type="KEGG" id="bcv:Bcav_3084"/>
<dbReference type="eggNOG" id="COG0736">
    <property type="taxonomic scope" value="Bacteria"/>
</dbReference>
<dbReference type="HOGENOM" id="CLU_089696_0_0_11"/>
<dbReference type="OrthoDB" id="517356at2"/>
<dbReference type="Proteomes" id="UP000007962">
    <property type="component" value="Chromosome"/>
</dbReference>
<dbReference type="GO" id="GO:0005737">
    <property type="term" value="C:cytoplasm"/>
    <property type="evidence" value="ECO:0007669"/>
    <property type="project" value="UniProtKB-SubCell"/>
</dbReference>
<dbReference type="GO" id="GO:0008897">
    <property type="term" value="F:holo-[acyl-carrier-protein] synthase activity"/>
    <property type="evidence" value="ECO:0007669"/>
    <property type="project" value="UniProtKB-UniRule"/>
</dbReference>
<dbReference type="GO" id="GO:0000287">
    <property type="term" value="F:magnesium ion binding"/>
    <property type="evidence" value="ECO:0007669"/>
    <property type="project" value="UniProtKB-UniRule"/>
</dbReference>
<dbReference type="GO" id="GO:0006633">
    <property type="term" value="P:fatty acid biosynthetic process"/>
    <property type="evidence" value="ECO:0007669"/>
    <property type="project" value="UniProtKB-UniRule"/>
</dbReference>
<dbReference type="Gene3D" id="3.90.470.20">
    <property type="entry name" value="4'-phosphopantetheinyl transferase domain"/>
    <property type="match status" value="1"/>
</dbReference>
<dbReference type="HAMAP" id="MF_00101">
    <property type="entry name" value="AcpS"/>
    <property type="match status" value="1"/>
</dbReference>
<dbReference type="InterPro" id="IPR008278">
    <property type="entry name" value="4-PPantetheinyl_Trfase_dom"/>
</dbReference>
<dbReference type="InterPro" id="IPR037143">
    <property type="entry name" value="4-PPantetheinyl_Trfase_dom_sf"/>
</dbReference>
<dbReference type="InterPro" id="IPR002582">
    <property type="entry name" value="ACPS"/>
</dbReference>
<dbReference type="InterPro" id="IPR004568">
    <property type="entry name" value="Ppantetheine-prot_Trfase_dom"/>
</dbReference>
<dbReference type="NCBIfam" id="TIGR00516">
    <property type="entry name" value="acpS"/>
    <property type="match status" value="1"/>
</dbReference>
<dbReference type="NCBIfam" id="TIGR00556">
    <property type="entry name" value="pantethn_trn"/>
    <property type="match status" value="1"/>
</dbReference>
<dbReference type="NCBIfam" id="NF000832">
    <property type="entry name" value="PRK00070.3-2"/>
    <property type="match status" value="1"/>
</dbReference>
<dbReference type="Pfam" id="PF01648">
    <property type="entry name" value="ACPS"/>
    <property type="match status" value="1"/>
</dbReference>
<dbReference type="SUPFAM" id="SSF56214">
    <property type="entry name" value="4'-phosphopantetheinyl transferase"/>
    <property type="match status" value="1"/>
</dbReference>
<accession>C5BZZ8</accession>